<accession>Q7S8M1</accession>
<accession>V5IP16</accession>
<protein>
    <recommendedName>
        <fullName>Mitochondrial fission 1 protein</fullName>
    </recommendedName>
    <alternativeName>
        <fullName>Mitochondrial transmission protein 2</fullName>
    </alternativeName>
</protein>
<keyword id="KW-0472">Membrane</keyword>
<keyword id="KW-0496">Mitochondrion</keyword>
<keyword id="KW-1000">Mitochondrion outer membrane</keyword>
<keyword id="KW-1185">Reference proteome</keyword>
<keyword id="KW-0677">Repeat</keyword>
<keyword id="KW-0802">TPR repeat</keyword>
<keyword id="KW-0812">Transmembrane</keyword>
<keyword id="KW-1133">Transmembrane helix</keyword>
<gene>
    <name type="primary">mtp-2</name>
    <name type="synonym">fis1</name>
    <name type="ORF">NCU05313</name>
</gene>
<sequence length="153" mass="16924">MTQLPYAVDAETPLNPAELNVLRAQYEKEGEMVGVQTKFNYAWGLVKSNVRADQHLGVMLLSEIFRTSPERRRECLYYLALGNYKLGNYAQARKYNDALLENEPANLQAANLRALIDDKVTKEGLMGVAIISGVAVAAGVIGGVLLRNLGRKR</sequence>
<feature type="chain" id="PRO_0000256188" description="Mitochondrial fission 1 protein">
    <location>
        <begin position="1"/>
        <end position="153"/>
    </location>
</feature>
<feature type="topological domain" description="Cytoplasmic" evidence="2">
    <location>
        <begin position="1"/>
        <end position="124"/>
    </location>
</feature>
<feature type="transmembrane region" description="Helical" evidence="2">
    <location>
        <begin position="125"/>
        <end position="145"/>
    </location>
</feature>
<feature type="topological domain" description="Mitochondrial intermembrane" evidence="2">
    <location>
        <begin position="146"/>
        <end position="153"/>
    </location>
</feature>
<feature type="repeat" description="TPR">
    <location>
        <begin position="73"/>
        <end position="106"/>
    </location>
</feature>
<dbReference type="EMBL" id="CM002239">
    <property type="protein sequence ID" value="ESA43065.1"/>
    <property type="molecule type" value="Genomic_DNA"/>
</dbReference>
<dbReference type="RefSeq" id="XP_011394156.1">
    <property type="nucleotide sequence ID" value="XM_011395854.1"/>
</dbReference>
<dbReference type="SMR" id="Q7S8M1"/>
<dbReference type="FunCoup" id="Q7S8M1">
    <property type="interactions" value="662"/>
</dbReference>
<dbReference type="STRING" id="367110.Q7S8M1"/>
<dbReference type="PaxDb" id="5141-EFNCRP00000005011"/>
<dbReference type="EnsemblFungi" id="ESA43065">
    <property type="protein sequence ID" value="ESA43065"/>
    <property type="gene ID" value="NCU05313"/>
</dbReference>
<dbReference type="GeneID" id="3878078"/>
<dbReference type="KEGG" id="ncr:NCU05313"/>
<dbReference type="VEuPathDB" id="FungiDB:NCU05313"/>
<dbReference type="HOGENOM" id="CLU_104368_2_0_1"/>
<dbReference type="InParanoid" id="Q7S8M1"/>
<dbReference type="OMA" id="QFNYAWG"/>
<dbReference type="OrthoDB" id="421154at2759"/>
<dbReference type="Proteomes" id="UP000001805">
    <property type="component" value="Chromosome 4, Linkage Group IV"/>
</dbReference>
<dbReference type="GO" id="GO:0005741">
    <property type="term" value="C:mitochondrial outer membrane"/>
    <property type="evidence" value="ECO:0000318"/>
    <property type="project" value="GO_Central"/>
</dbReference>
<dbReference type="GO" id="GO:0005778">
    <property type="term" value="C:peroxisomal membrane"/>
    <property type="evidence" value="ECO:0000318"/>
    <property type="project" value="GO_Central"/>
</dbReference>
<dbReference type="GO" id="GO:0008289">
    <property type="term" value="F:lipid binding"/>
    <property type="evidence" value="ECO:0000318"/>
    <property type="project" value="GO_Central"/>
</dbReference>
<dbReference type="GO" id="GO:0060090">
    <property type="term" value="F:molecular adaptor activity"/>
    <property type="evidence" value="ECO:0000318"/>
    <property type="project" value="GO_Central"/>
</dbReference>
<dbReference type="GO" id="GO:0000266">
    <property type="term" value="P:mitochondrial fission"/>
    <property type="evidence" value="ECO:0000318"/>
    <property type="project" value="GO_Central"/>
</dbReference>
<dbReference type="GO" id="GO:0016559">
    <property type="term" value="P:peroxisome fission"/>
    <property type="evidence" value="ECO:0000318"/>
    <property type="project" value="GO_Central"/>
</dbReference>
<dbReference type="CDD" id="cd12212">
    <property type="entry name" value="Fis1"/>
    <property type="match status" value="1"/>
</dbReference>
<dbReference type="FunFam" id="1.25.40.10:FF:000179">
    <property type="entry name" value="Mitochondrial fission 1 protein"/>
    <property type="match status" value="1"/>
</dbReference>
<dbReference type="Gene3D" id="1.25.40.10">
    <property type="entry name" value="Tetratricopeptide repeat domain"/>
    <property type="match status" value="1"/>
</dbReference>
<dbReference type="InterPro" id="IPR016543">
    <property type="entry name" value="Fis1"/>
</dbReference>
<dbReference type="InterPro" id="IPR033745">
    <property type="entry name" value="Fis1_cytosol"/>
</dbReference>
<dbReference type="InterPro" id="IPR028061">
    <property type="entry name" value="Fis1_TPR_C"/>
</dbReference>
<dbReference type="InterPro" id="IPR028058">
    <property type="entry name" value="Fis1_TPR_N"/>
</dbReference>
<dbReference type="InterPro" id="IPR011990">
    <property type="entry name" value="TPR-like_helical_dom_sf"/>
</dbReference>
<dbReference type="PANTHER" id="PTHR13247:SF0">
    <property type="entry name" value="MITOCHONDRIAL FISSION 1 PROTEIN"/>
    <property type="match status" value="1"/>
</dbReference>
<dbReference type="PANTHER" id="PTHR13247">
    <property type="entry name" value="TETRATRICOPEPTIDE REPEAT PROTEIN 11 TPR REPEAT PROTEIN 11"/>
    <property type="match status" value="1"/>
</dbReference>
<dbReference type="Pfam" id="PF14853">
    <property type="entry name" value="Fis1_TPR_C"/>
    <property type="match status" value="1"/>
</dbReference>
<dbReference type="Pfam" id="PF14852">
    <property type="entry name" value="Fis1_TPR_N"/>
    <property type="match status" value="1"/>
</dbReference>
<dbReference type="PIRSF" id="PIRSF008835">
    <property type="entry name" value="TPR_repeat_11_Fis1"/>
    <property type="match status" value="1"/>
</dbReference>
<dbReference type="SUPFAM" id="SSF48452">
    <property type="entry name" value="TPR-like"/>
    <property type="match status" value="1"/>
</dbReference>
<reference key="1">
    <citation type="journal article" date="2003" name="Nature">
        <title>The genome sequence of the filamentous fungus Neurospora crassa.</title>
        <authorList>
            <person name="Galagan J.E."/>
            <person name="Calvo S.E."/>
            <person name="Borkovich K.A."/>
            <person name="Selker E.U."/>
            <person name="Read N.D."/>
            <person name="Jaffe D.B."/>
            <person name="FitzHugh W."/>
            <person name="Ma L.-J."/>
            <person name="Smirnov S."/>
            <person name="Purcell S."/>
            <person name="Rehman B."/>
            <person name="Elkins T."/>
            <person name="Engels R."/>
            <person name="Wang S."/>
            <person name="Nielsen C.B."/>
            <person name="Butler J."/>
            <person name="Endrizzi M."/>
            <person name="Qui D."/>
            <person name="Ianakiev P."/>
            <person name="Bell-Pedersen D."/>
            <person name="Nelson M.A."/>
            <person name="Werner-Washburne M."/>
            <person name="Selitrennikoff C.P."/>
            <person name="Kinsey J.A."/>
            <person name="Braun E.L."/>
            <person name="Zelter A."/>
            <person name="Schulte U."/>
            <person name="Kothe G.O."/>
            <person name="Jedd G."/>
            <person name="Mewes H.-W."/>
            <person name="Staben C."/>
            <person name="Marcotte E."/>
            <person name="Greenberg D."/>
            <person name="Roy A."/>
            <person name="Foley K."/>
            <person name="Naylor J."/>
            <person name="Stange-Thomann N."/>
            <person name="Barrett R."/>
            <person name="Gnerre S."/>
            <person name="Kamal M."/>
            <person name="Kamvysselis M."/>
            <person name="Mauceli E.W."/>
            <person name="Bielke C."/>
            <person name="Rudd S."/>
            <person name="Frishman D."/>
            <person name="Krystofova S."/>
            <person name="Rasmussen C."/>
            <person name="Metzenberg R.L."/>
            <person name="Perkins D.D."/>
            <person name="Kroken S."/>
            <person name="Cogoni C."/>
            <person name="Macino G."/>
            <person name="Catcheside D.E.A."/>
            <person name="Li W."/>
            <person name="Pratt R.J."/>
            <person name="Osmani S.A."/>
            <person name="DeSouza C.P.C."/>
            <person name="Glass N.L."/>
            <person name="Orbach M.J."/>
            <person name="Berglund J.A."/>
            <person name="Voelker R."/>
            <person name="Yarden O."/>
            <person name="Plamann M."/>
            <person name="Seiler S."/>
            <person name="Dunlap J.C."/>
            <person name="Radford A."/>
            <person name="Aramayo R."/>
            <person name="Natvig D.O."/>
            <person name="Alex L.A."/>
            <person name="Mannhaupt G."/>
            <person name="Ebbole D.J."/>
            <person name="Freitag M."/>
            <person name="Paulsen I."/>
            <person name="Sachs M.S."/>
            <person name="Lander E.S."/>
            <person name="Nusbaum C."/>
            <person name="Birren B.W."/>
        </authorList>
    </citation>
    <scope>NUCLEOTIDE SEQUENCE [LARGE SCALE GENOMIC DNA]</scope>
    <source>
        <strain>ATCC 24698 / 74-OR23-1A / CBS 708.71 / DSM 1257 / FGSC 987</strain>
    </source>
</reference>
<name>FIS1_NEUCR</name>
<organism>
    <name type="scientific">Neurospora crassa (strain ATCC 24698 / 74-OR23-1A / CBS 708.71 / DSM 1257 / FGSC 987)</name>
    <dbReference type="NCBI Taxonomy" id="367110"/>
    <lineage>
        <taxon>Eukaryota</taxon>
        <taxon>Fungi</taxon>
        <taxon>Dikarya</taxon>
        <taxon>Ascomycota</taxon>
        <taxon>Pezizomycotina</taxon>
        <taxon>Sordariomycetes</taxon>
        <taxon>Sordariomycetidae</taxon>
        <taxon>Sordariales</taxon>
        <taxon>Sordariaceae</taxon>
        <taxon>Neurospora</taxon>
    </lineage>
</organism>
<proteinExistence type="inferred from homology"/>
<comment type="function">
    <text evidence="1">Has a role in mitochondrial fission. Has a role in outer membrane fission but not matrix separation (By similarity).</text>
</comment>
<comment type="subcellular location">
    <subcellularLocation>
        <location evidence="1">Mitochondrion outer membrane</location>
        <topology evidence="1">Single-pass membrane protein</topology>
    </subcellularLocation>
</comment>
<comment type="domain">
    <text evidence="1">The C-terminus is required for mitochondrial localization, while the N-terminus is necessary for mitochondrial fission.</text>
</comment>
<comment type="similarity">
    <text evidence="3">Belongs to the FIS1 family.</text>
</comment>
<evidence type="ECO:0000250" key="1"/>
<evidence type="ECO:0000255" key="2"/>
<evidence type="ECO:0000305" key="3"/>